<name>PPNP1_PSYCK</name>
<reference key="1">
    <citation type="submission" date="2006-03" db="EMBL/GenBank/DDBJ databases">
        <title>Complete sequence of chromosome of Psychrobacter cryohalolentis K5.</title>
        <authorList>
            <consortium name="US DOE Joint Genome Institute"/>
            <person name="Copeland A."/>
            <person name="Lucas S."/>
            <person name="Lapidus A."/>
            <person name="Barry K."/>
            <person name="Detter J.C."/>
            <person name="Glavina T."/>
            <person name="Hammon N."/>
            <person name="Israni S."/>
            <person name="Dalin E."/>
            <person name="Tice H."/>
            <person name="Pitluck S."/>
            <person name="Brettin T."/>
            <person name="Bruce D."/>
            <person name="Han C."/>
            <person name="Tapia R."/>
            <person name="Sims D.R."/>
            <person name="Gilna P."/>
            <person name="Schmutz J."/>
            <person name="Larimer F."/>
            <person name="Land M."/>
            <person name="Hauser L."/>
            <person name="Kyrpides N."/>
            <person name="Kim E."/>
            <person name="Richardson P."/>
        </authorList>
    </citation>
    <scope>NUCLEOTIDE SEQUENCE [LARGE SCALE GENOMIC DNA]</scope>
    <source>
        <strain>ATCC BAA-1226 / DSM 17306 / VKM B-2378 / K5</strain>
    </source>
</reference>
<proteinExistence type="inferred from homology"/>
<protein>
    <recommendedName>
        <fullName evidence="1">Pyrimidine/purine nucleoside phosphorylase 1</fullName>
        <ecNumber evidence="1">2.4.2.1</ecNumber>
        <ecNumber evidence="1">2.4.2.2</ecNumber>
    </recommendedName>
    <alternativeName>
        <fullName evidence="1">Adenosine phosphorylase 1</fullName>
    </alternativeName>
    <alternativeName>
        <fullName evidence="1">Cytidine phosphorylase 1</fullName>
    </alternativeName>
    <alternativeName>
        <fullName evidence="1">Guanosine phosphorylase 1</fullName>
    </alternativeName>
    <alternativeName>
        <fullName evidence="1">Inosine phosphorylase 1</fullName>
    </alternativeName>
    <alternativeName>
        <fullName evidence="1">Thymidine phosphorylase 1</fullName>
    </alternativeName>
    <alternativeName>
        <fullName evidence="1">Uridine phosphorylase 1</fullName>
    </alternativeName>
    <alternativeName>
        <fullName evidence="1">Xanthosine phosphorylase 1</fullName>
    </alternativeName>
</protein>
<dbReference type="EC" id="2.4.2.1" evidence="1"/>
<dbReference type="EC" id="2.4.2.2" evidence="1"/>
<dbReference type="EMBL" id="CP000323">
    <property type="protein sequence ID" value="ABE73848.1"/>
    <property type="molecule type" value="Genomic_DNA"/>
</dbReference>
<dbReference type="RefSeq" id="WP_011512439.1">
    <property type="nucleotide sequence ID" value="NC_007969.1"/>
</dbReference>
<dbReference type="SMR" id="Q1QEQ5"/>
<dbReference type="STRING" id="335284.Pcryo_0064"/>
<dbReference type="KEGG" id="pcr:Pcryo_0064"/>
<dbReference type="eggNOG" id="COG3123">
    <property type="taxonomic scope" value="Bacteria"/>
</dbReference>
<dbReference type="HOGENOM" id="CLU_157874_1_0_6"/>
<dbReference type="Proteomes" id="UP000002425">
    <property type="component" value="Chromosome"/>
</dbReference>
<dbReference type="GO" id="GO:0005829">
    <property type="term" value="C:cytosol"/>
    <property type="evidence" value="ECO:0007669"/>
    <property type="project" value="TreeGrafter"/>
</dbReference>
<dbReference type="GO" id="GO:0047975">
    <property type="term" value="F:guanosine phosphorylase activity"/>
    <property type="evidence" value="ECO:0007669"/>
    <property type="project" value="UniProtKB-EC"/>
</dbReference>
<dbReference type="GO" id="GO:0004731">
    <property type="term" value="F:purine-nucleoside phosphorylase activity"/>
    <property type="evidence" value="ECO:0007669"/>
    <property type="project" value="UniProtKB-UniRule"/>
</dbReference>
<dbReference type="GO" id="GO:0009032">
    <property type="term" value="F:thymidine phosphorylase activity"/>
    <property type="evidence" value="ECO:0007669"/>
    <property type="project" value="UniProtKB-EC"/>
</dbReference>
<dbReference type="GO" id="GO:0004850">
    <property type="term" value="F:uridine phosphorylase activity"/>
    <property type="evidence" value="ECO:0007669"/>
    <property type="project" value="UniProtKB-EC"/>
</dbReference>
<dbReference type="CDD" id="cd20296">
    <property type="entry name" value="cupin_PpnP-like"/>
    <property type="match status" value="1"/>
</dbReference>
<dbReference type="Gene3D" id="2.60.120.10">
    <property type="entry name" value="Jelly Rolls"/>
    <property type="match status" value="1"/>
</dbReference>
<dbReference type="HAMAP" id="MF_01537">
    <property type="entry name" value="Nucleos_phosphorylase_PpnP"/>
    <property type="match status" value="1"/>
</dbReference>
<dbReference type="InterPro" id="IPR009664">
    <property type="entry name" value="Ppnp"/>
</dbReference>
<dbReference type="InterPro" id="IPR014710">
    <property type="entry name" value="RmlC-like_jellyroll"/>
</dbReference>
<dbReference type="InterPro" id="IPR011051">
    <property type="entry name" value="RmlC_Cupin_sf"/>
</dbReference>
<dbReference type="PANTHER" id="PTHR36540">
    <property type="entry name" value="PYRIMIDINE/PURINE NUCLEOSIDE PHOSPHORYLASE"/>
    <property type="match status" value="1"/>
</dbReference>
<dbReference type="PANTHER" id="PTHR36540:SF1">
    <property type="entry name" value="PYRIMIDINE_PURINE NUCLEOSIDE PHOSPHORYLASE"/>
    <property type="match status" value="1"/>
</dbReference>
<dbReference type="Pfam" id="PF06865">
    <property type="entry name" value="Ppnp"/>
    <property type="match status" value="1"/>
</dbReference>
<dbReference type="SUPFAM" id="SSF51182">
    <property type="entry name" value="RmlC-like cupins"/>
    <property type="match status" value="1"/>
</dbReference>
<accession>Q1QEQ5</accession>
<sequence>MTAAQFTNVTVNAQATISYDGRCSSHTIMFEDGRHKTLGVILPCDNLVEHYHFSTNTSERIEITSGECEVKINGEEEFSYYRAGQSFVVEGNSGFNLRTEQIVQYICHLEG</sequence>
<evidence type="ECO:0000255" key="1">
    <source>
        <dbReference type="HAMAP-Rule" id="MF_01537"/>
    </source>
</evidence>
<keyword id="KW-0328">Glycosyltransferase</keyword>
<keyword id="KW-0808">Transferase</keyword>
<gene>
    <name evidence="1" type="primary">ppnP1</name>
    <name type="ordered locus">Pcryo_0064</name>
</gene>
<organism>
    <name type="scientific">Psychrobacter cryohalolentis (strain ATCC BAA-1226 / DSM 17306 / VKM B-2378 / K5)</name>
    <dbReference type="NCBI Taxonomy" id="335284"/>
    <lineage>
        <taxon>Bacteria</taxon>
        <taxon>Pseudomonadati</taxon>
        <taxon>Pseudomonadota</taxon>
        <taxon>Gammaproteobacteria</taxon>
        <taxon>Moraxellales</taxon>
        <taxon>Moraxellaceae</taxon>
        <taxon>Psychrobacter</taxon>
    </lineage>
</organism>
<feature type="chain" id="PRO_0000298718" description="Pyrimidine/purine nucleoside phosphorylase 1">
    <location>
        <begin position="1"/>
        <end position="111"/>
    </location>
</feature>
<comment type="function">
    <text evidence="1">Catalyzes the phosphorolysis of diverse nucleosides, yielding D-ribose 1-phosphate and the respective free bases. Can use uridine, adenosine, guanosine, cytidine, thymidine, inosine and xanthosine as substrates. Also catalyzes the reverse reactions.</text>
</comment>
<comment type="catalytic activity">
    <reaction evidence="1">
        <text>a purine D-ribonucleoside + phosphate = a purine nucleobase + alpha-D-ribose 1-phosphate</text>
        <dbReference type="Rhea" id="RHEA:19805"/>
        <dbReference type="ChEBI" id="CHEBI:26386"/>
        <dbReference type="ChEBI" id="CHEBI:43474"/>
        <dbReference type="ChEBI" id="CHEBI:57720"/>
        <dbReference type="ChEBI" id="CHEBI:142355"/>
        <dbReference type="EC" id="2.4.2.1"/>
    </reaction>
</comment>
<comment type="catalytic activity">
    <reaction evidence="1">
        <text>adenosine + phosphate = alpha-D-ribose 1-phosphate + adenine</text>
        <dbReference type="Rhea" id="RHEA:27642"/>
        <dbReference type="ChEBI" id="CHEBI:16335"/>
        <dbReference type="ChEBI" id="CHEBI:16708"/>
        <dbReference type="ChEBI" id="CHEBI:43474"/>
        <dbReference type="ChEBI" id="CHEBI:57720"/>
        <dbReference type="EC" id="2.4.2.1"/>
    </reaction>
</comment>
<comment type="catalytic activity">
    <reaction evidence="1">
        <text>cytidine + phosphate = cytosine + alpha-D-ribose 1-phosphate</text>
        <dbReference type="Rhea" id="RHEA:52540"/>
        <dbReference type="ChEBI" id="CHEBI:16040"/>
        <dbReference type="ChEBI" id="CHEBI:17562"/>
        <dbReference type="ChEBI" id="CHEBI:43474"/>
        <dbReference type="ChEBI" id="CHEBI:57720"/>
        <dbReference type="EC" id="2.4.2.2"/>
    </reaction>
</comment>
<comment type="catalytic activity">
    <reaction evidence="1">
        <text>guanosine + phosphate = alpha-D-ribose 1-phosphate + guanine</text>
        <dbReference type="Rhea" id="RHEA:13233"/>
        <dbReference type="ChEBI" id="CHEBI:16235"/>
        <dbReference type="ChEBI" id="CHEBI:16750"/>
        <dbReference type="ChEBI" id="CHEBI:43474"/>
        <dbReference type="ChEBI" id="CHEBI:57720"/>
        <dbReference type="EC" id="2.4.2.1"/>
    </reaction>
</comment>
<comment type="catalytic activity">
    <reaction evidence="1">
        <text>inosine + phosphate = alpha-D-ribose 1-phosphate + hypoxanthine</text>
        <dbReference type="Rhea" id="RHEA:27646"/>
        <dbReference type="ChEBI" id="CHEBI:17368"/>
        <dbReference type="ChEBI" id="CHEBI:17596"/>
        <dbReference type="ChEBI" id="CHEBI:43474"/>
        <dbReference type="ChEBI" id="CHEBI:57720"/>
        <dbReference type="EC" id="2.4.2.1"/>
    </reaction>
</comment>
<comment type="catalytic activity">
    <reaction evidence="1">
        <text>thymidine + phosphate = 2-deoxy-alpha-D-ribose 1-phosphate + thymine</text>
        <dbReference type="Rhea" id="RHEA:16037"/>
        <dbReference type="ChEBI" id="CHEBI:17748"/>
        <dbReference type="ChEBI" id="CHEBI:17821"/>
        <dbReference type="ChEBI" id="CHEBI:43474"/>
        <dbReference type="ChEBI" id="CHEBI:57259"/>
        <dbReference type="EC" id="2.4.2.2"/>
    </reaction>
</comment>
<comment type="catalytic activity">
    <reaction evidence="1">
        <text>uridine + phosphate = alpha-D-ribose 1-phosphate + uracil</text>
        <dbReference type="Rhea" id="RHEA:24388"/>
        <dbReference type="ChEBI" id="CHEBI:16704"/>
        <dbReference type="ChEBI" id="CHEBI:17568"/>
        <dbReference type="ChEBI" id="CHEBI:43474"/>
        <dbReference type="ChEBI" id="CHEBI:57720"/>
        <dbReference type="EC" id="2.4.2.2"/>
    </reaction>
</comment>
<comment type="catalytic activity">
    <reaction evidence="1">
        <text>xanthosine + phosphate = alpha-D-ribose 1-phosphate + xanthine</text>
        <dbReference type="Rhea" id="RHEA:27638"/>
        <dbReference type="ChEBI" id="CHEBI:17712"/>
        <dbReference type="ChEBI" id="CHEBI:18107"/>
        <dbReference type="ChEBI" id="CHEBI:43474"/>
        <dbReference type="ChEBI" id="CHEBI:57720"/>
        <dbReference type="EC" id="2.4.2.1"/>
    </reaction>
</comment>
<comment type="similarity">
    <text evidence="1">Belongs to the nucleoside phosphorylase PpnP family.</text>
</comment>